<feature type="initiator methionine" description="Removed" evidence="1">
    <location>
        <position position="1"/>
    </location>
</feature>
<feature type="chain" id="PRO_0000083692" description="3-isopropylmalate dehydrogenase">
    <location>
        <begin position="2"/>
        <end position="363"/>
    </location>
</feature>
<feature type="binding site" evidence="2">
    <location>
        <begin position="78"/>
        <end position="91"/>
    </location>
    <ligand>
        <name>NAD(+)</name>
        <dbReference type="ChEBI" id="CHEBI:57540"/>
    </ligand>
</feature>
<feature type="binding site" evidence="2">
    <location>
        <position position="99"/>
    </location>
    <ligand>
        <name>substrate</name>
    </ligand>
</feature>
<feature type="binding site" evidence="2">
    <location>
        <position position="109"/>
    </location>
    <ligand>
        <name>substrate</name>
    </ligand>
</feature>
<feature type="binding site" evidence="2">
    <location>
        <position position="138"/>
    </location>
    <ligand>
        <name>substrate</name>
    </ligand>
</feature>
<feature type="binding site" evidence="2">
    <location>
        <position position="227"/>
    </location>
    <ligand>
        <name>Mg(2+)</name>
        <dbReference type="ChEBI" id="CHEBI:18420"/>
    </ligand>
</feature>
<feature type="binding site" evidence="2">
    <location>
        <position position="227"/>
    </location>
    <ligand>
        <name>substrate</name>
    </ligand>
</feature>
<feature type="binding site" evidence="2">
    <location>
        <position position="251"/>
    </location>
    <ligand>
        <name>Mg(2+)</name>
        <dbReference type="ChEBI" id="CHEBI:18420"/>
    </ligand>
</feature>
<feature type="binding site" evidence="2">
    <location>
        <position position="255"/>
    </location>
    <ligand>
        <name>Mg(2+)</name>
        <dbReference type="ChEBI" id="CHEBI:18420"/>
    </ligand>
</feature>
<feature type="binding site" evidence="2">
    <location>
        <begin position="285"/>
        <end position="297"/>
    </location>
    <ligand>
        <name>NAD(+)</name>
        <dbReference type="ChEBI" id="CHEBI:57540"/>
    </ligand>
</feature>
<feature type="site" description="Important for catalysis" evidence="2">
    <location>
        <position position="145"/>
    </location>
</feature>
<feature type="site" description="Important for catalysis" evidence="2">
    <location>
        <position position="195"/>
    </location>
</feature>
<organism>
    <name type="scientific">Escherichia coli O157:H7</name>
    <dbReference type="NCBI Taxonomy" id="83334"/>
    <lineage>
        <taxon>Bacteria</taxon>
        <taxon>Pseudomonadati</taxon>
        <taxon>Pseudomonadota</taxon>
        <taxon>Gammaproteobacteria</taxon>
        <taxon>Enterobacterales</taxon>
        <taxon>Enterobacteriaceae</taxon>
        <taxon>Escherichia</taxon>
    </lineage>
</organism>
<name>LEU3_ECO57</name>
<comment type="function">
    <text evidence="2">Catalyzes the oxidation of 3-carboxy-2-hydroxy-4-methylpentanoate (3-isopropylmalate) to 3-carboxy-4-methyl-2-oxopentanoate. The product decarboxylates to 4-methyl-2 oxopentanoate.</text>
</comment>
<comment type="catalytic activity">
    <reaction evidence="2">
        <text>(2R,3S)-3-isopropylmalate + NAD(+) = 4-methyl-2-oxopentanoate + CO2 + NADH</text>
        <dbReference type="Rhea" id="RHEA:32271"/>
        <dbReference type="ChEBI" id="CHEBI:16526"/>
        <dbReference type="ChEBI" id="CHEBI:17865"/>
        <dbReference type="ChEBI" id="CHEBI:35121"/>
        <dbReference type="ChEBI" id="CHEBI:57540"/>
        <dbReference type="ChEBI" id="CHEBI:57945"/>
        <dbReference type="EC" id="1.1.1.85"/>
    </reaction>
</comment>
<comment type="cofactor">
    <cofactor evidence="2">
        <name>Mg(2+)</name>
        <dbReference type="ChEBI" id="CHEBI:18420"/>
    </cofactor>
    <cofactor evidence="2">
        <name>Mn(2+)</name>
        <dbReference type="ChEBI" id="CHEBI:29035"/>
    </cofactor>
    <text evidence="2">Binds 1 Mg(2+) or Mn(2+) ion per subunit.</text>
</comment>
<comment type="pathway">
    <text evidence="2">Amino-acid biosynthesis; L-leucine biosynthesis; L-leucine from 3-methyl-2-oxobutanoate: step 3/4.</text>
</comment>
<comment type="subunit">
    <text evidence="2">Homodimer.</text>
</comment>
<comment type="subcellular location">
    <subcellularLocation>
        <location evidence="2">Cytoplasm</location>
    </subcellularLocation>
</comment>
<comment type="similarity">
    <text evidence="2">Belongs to the isocitrate and isopropylmalate dehydrogenases family. LeuB type 1 subfamily.</text>
</comment>
<comment type="sequence caution" evidence="3">
    <conflict type="erroneous initiation">
        <sequence resource="EMBL-CDS" id="AAG54377"/>
    </conflict>
    <text>Extended N-terminus.</text>
</comment>
<reference key="1">
    <citation type="journal article" date="2001" name="Nature">
        <title>Genome sequence of enterohaemorrhagic Escherichia coli O157:H7.</title>
        <authorList>
            <person name="Perna N.T."/>
            <person name="Plunkett G. III"/>
            <person name="Burland V."/>
            <person name="Mau B."/>
            <person name="Glasner J.D."/>
            <person name="Rose D.J."/>
            <person name="Mayhew G.F."/>
            <person name="Evans P.S."/>
            <person name="Gregor J."/>
            <person name="Kirkpatrick H.A."/>
            <person name="Posfai G."/>
            <person name="Hackett J."/>
            <person name="Klink S."/>
            <person name="Boutin A."/>
            <person name="Shao Y."/>
            <person name="Miller L."/>
            <person name="Grotbeck E.J."/>
            <person name="Davis N.W."/>
            <person name="Lim A."/>
            <person name="Dimalanta E.T."/>
            <person name="Potamousis K."/>
            <person name="Apodaca J."/>
            <person name="Anantharaman T.S."/>
            <person name="Lin J."/>
            <person name="Yen G."/>
            <person name="Schwartz D.C."/>
            <person name="Welch R.A."/>
            <person name="Blattner F.R."/>
        </authorList>
    </citation>
    <scope>NUCLEOTIDE SEQUENCE [LARGE SCALE GENOMIC DNA]</scope>
    <source>
        <strain>O157:H7 / EDL933 / ATCC 700927 / EHEC</strain>
    </source>
</reference>
<reference key="2">
    <citation type="journal article" date="2001" name="DNA Res.">
        <title>Complete genome sequence of enterohemorrhagic Escherichia coli O157:H7 and genomic comparison with a laboratory strain K-12.</title>
        <authorList>
            <person name="Hayashi T."/>
            <person name="Makino K."/>
            <person name="Ohnishi M."/>
            <person name="Kurokawa K."/>
            <person name="Ishii K."/>
            <person name="Yokoyama K."/>
            <person name="Han C.-G."/>
            <person name="Ohtsubo E."/>
            <person name="Nakayama K."/>
            <person name="Murata T."/>
            <person name="Tanaka M."/>
            <person name="Tobe T."/>
            <person name="Iida T."/>
            <person name="Takami H."/>
            <person name="Honda T."/>
            <person name="Sasakawa C."/>
            <person name="Ogasawara N."/>
            <person name="Yasunaga T."/>
            <person name="Kuhara S."/>
            <person name="Shiba T."/>
            <person name="Hattori M."/>
            <person name="Shinagawa H."/>
        </authorList>
    </citation>
    <scope>NUCLEOTIDE SEQUENCE [LARGE SCALE GENOMIC DNA]</scope>
    <source>
        <strain>O157:H7 / Sakai / RIMD 0509952 / EHEC</strain>
    </source>
</reference>
<accession>Q8X9Z9</accession>
<proteinExistence type="inferred from homology"/>
<gene>
    <name evidence="2" type="primary">leuB</name>
    <name type="ordered locus">Z0082</name>
    <name type="ordered locus">ECs0077</name>
</gene>
<protein>
    <recommendedName>
        <fullName evidence="2">3-isopropylmalate dehydrogenase</fullName>
        <ecNumber evidence="2">1.1.1.85</ecNumber>
    </recommendedName>
    <alternativeName>
        <fullName evidence="2">3-IPM-DH</fullName>
    </alternativeName>
    <alternativeName>
        <fullName evidence="2">Beta-IPM dehydrogenase</fullName>
        <shortName evidence="2">IMDH</shortName>
    </alternativeName>
</protein>
<dbReference type="EC" id="1.1.1.85" evidence="2"/>
<dbReference type="EMBL" id="AE005174">
    <property type="protein sequence ID" value="AAG54377.1"/>
    <property type="status" value="ALT_INIT"/>
    <property type="molecule type" value="Genomic_DNA"/>
</dbReference>
<dbReference type="EMBL" id="BA000007">
    <property type="protein sequence ID" value="BAB33500.2"/>
    <property type="molecule type" value="Genomic_DNA"/>
</dbReference>
<dbReference type="PIR" id="E85489">
    <property type="entry name" value="E85489"/>
</dbReference>
<dbReference type="PIR" id="E90638">
    <property type="entry name" value="E90638"/>
</dbReference>
<dbReference type="RefSeq" id="NP_308104.2">
    <property type="nucleotide sequence ID" value="NC_002695.1"/>
</dbReference>
<dbReference type="RefSeq" id="WP_000042351.1">
    <property type="nucleotide sequence ID" value="NZ_VOAI01000002.1"/>
</dbReference>
<dbReference type="SMR" id="Q8X9Z9"/>
<dbReference type="STRING" id="155864.Z0082"/>
<dbReference type="GeneID" id="913510"/>
<dbReference type="KEGG" id="ece:Z0082"/>
<dbReference type="KEGG" id="ecs:ECs_0077"/>
<dbReference type="PATRIC" id="fig|386585.9.peg.177"/>
<dbReference type="eggNOG" id="COG0473">
    <property type="taxonomic scope" value="Bacteria"/>
</dbReference>
<dbReference type="HOGENOM" id="CLU_031953_0_3_6"/>
<dbReference type="OMA" id="EYDLGAR"/>
<dbReference type="UniPathway" id="UPA00048">
    <property type="reaction ID" value="UER00072"/>
</dbReference>
<dbReference type="Proteomes" id="UP000000558">
    <property type="component" value="Chromosome"/>
</dbReference>
<dbReference type="Proteomes" id="UP000002519">
    <property type="component" value="Chromosome"/>
</dbReference>
<dbReference type="GO" id="GO:0005829">
    <property type="term" value="C:cytosol"/>
    <property type="evidence" value="ECO:0007669"/>
    <property type="project" value="TreeGrafter"/>
</dbReference>
<dbReference type="GO" id="GO:0003862">
    <property type="term" value="F:3-isopropylmalate dehydrogenase activity"/>
    <property type="evidence" value="ECO:0007669"/>
    <property type="project" value="UniProtKB-UniRule"/>
</dbReference>
<dbReference type="GO" id="GO:0000287">
    <property type="term" value="F:magnesium ion binding"/>
    <property type="evidence" value="ECO:0007669"/>
    <property type="project" value="InterPro"/>
</dbReference>
<dbReference type="GO" id="GO:0051287">
    <property type="term" value="F:NAD binding"/>
    <property type="evidence" value="ECO:0007669"/>
    <property type="project" value="InterPro"/>
</dbReference>
<dbReference type="GO" id="GO:0009098">
    <property type="term" value="P:L-leucine biosynthetic process"/>
    <property type="evidence" value="ECO:0007669"/>
    <property type="project" value="UniProtKB-UniRule"/>
</dbReference>
<dbReference type="FunFam" id="3.40.718.10:FF:000004">
    <property type="entry name" value="3-isopropylmalate dehydrogenase"/>
    <property type="match status" value="1"/>
</dbReference>
<dbReference type="Gene3D" id="3.40.718.10">
    <property type="entry name" value="Isopropylmalate Dehydrogenase"/>
    <property type="match status" value="1"/>
</dbReference>
<dbReference type="HAMAP" id="MF_01033">
    <property type="entry name" value="LeuB_type1"/>
    <property type="match status" value="1"/>
</dbReference>
<dbReference type="InterPro" id="IPR019818">
    <property type="entry name" value="IsoCit/isopropylmalate_DH_CS"/>
</dbReference>
<dbReference type="InterPro" id="IPR024084">
    <property type="entry name" value="IsoPropMal-DH-like_dom"/>
</dbReference>
<dbReference type="InterPro" id="IPR004429">
    <property type="entry name" value="Isopropylmalate_DH"/>
</dbReference>
<dbReference type="NCBIfam" id="TIGR00169">
    <property type="entry name" value="leuB"/>
    <property type="match status" value="1"/>
</dbReference>
<dbReference type="PANTHER" id="PTHR42979">
    <property type="entry name" value="3-ISOPROPYLMALATE DEHYDROGENASE"/>
    <property type="match status" value="1"/>
</dbReference>
<dbReference type="PANTHER" id="PTHR42979:SF1">
    <property type="entry name" value="3-ISOPROPYLMALATE DEHYDROGENASE"/>
    <property type="match status" value="1"/>
</dbReference>
<dbReference type="Pfam" id="PF00180">
    <property type="entry name" value="Iso_dh"/>
    <property type="match status" value="1"/>
</dbReference>
<dbReference type="SMART" id="SM01329">
    <property type="entry name" value="Iso_dh"/>
    <property type="match status" value="1"/>
</dbReference>
<dbReference type="SUPFAM" id="SSF53659">
    <property type="entry name" value="Isocitrate/Isopropylmalate dehydrogenase-like"/>
    <property type="match status" value="1"/>
</dbReference>
<dbReference type="PROSITE" id="PS00470">
    <property type="entry name" value="IDH_IMDH"/>
    <property type="match status" value="1"/>
</dbReference>
<keyword id="KW-0028">Amino-acid biosynthesis</keyword>
<keyword id="KW-0100">Branched-chain amino acid biosynthesis</keyword>
<keyword id="KW-0963">Cytoplasm</keyword>
<keyword id="KW-0432">Leucine biosynthesis</keyword>
<keyword id="KW-0460">Magnesium</keyword>
<keyword id="KW-0464">Manganese</keyword>
<keyword id="KW-0479">Metal-binding</keyword>
<keyword id="KW-0520">NAD</keyword>
<keyword id="KW-0560">Oxidoreductase</keyword>
<keyword id="KW-1185">Reference proteome</keyword>
<sequence>MSKNYHIAVLPGDGIGPEVMTQALKVLDAVRNRFAMRITTSHYDVGGAAIDNHGQPLPPATVEGCEQADAVLFGSVGGPKWEHLPPDQQPERGALLPLRKHFKLFSNLRPAKLYQGLEAFCPLRADIAANGFDILCVRELTGGIYFGQPKGREGSGQYEKAFDTEVYHRFEIERIARIAFESARKRRHKVTSIDKANVLQSSILWREIVNEIATEYPDIELAHMYIDNATMQLIKDPSQFDVLLCSNLFGDILSDECAMITGSMGMLPSASLNEQGFGLYEPAGGSAPDIAGKNIANPIAQILSLALLLRYSLDADDAASAIERAINRALEEGIRTGDLARGAAAVSTDEMGDIIARYVAEGV</sequence>
<evidence type="ECO:0000250" key="1"/>
<evidence type="ECO:0000255" key="2">
    <source>
        <dbReference type="HAMAP-Rule" id="MF_01033"/>
    </source>
</evidence>
<evidence type="ECO:0000305" key="3"/>